<dbReference type="EMBL" id="AY519538">
    <property type="protein sequence ID" value="AAS10008.1"/>
    <property type="molecule type" value="mRNA"/>
</dbReference>
<dbReference type="EMBL" id="AC022492">
    <property type="protein sequence ID" value="AAF79481.1"/>
    <property type="status" value="ALT_SEQ"/>
    <property type="molecule type" value="Genomic_DNA"/>
</dbReference>
<dbReference type="EMBL" id="CP002684">
    <property type="protein sequence ID" value="AEE29601.1"/>
    <property type="molecule type" value="Genomic_DNA"/>
</dbReference>
<dbReference type="EMBL" id="AK118533">
    <property type="protein sequence ID" value="BAC43136.1"/>
    <property type="molecule type" value="mRNA"/>
</dbReference>
<dbReference type="EMBL" id="BT005290">
    <property type="protein sequence ID" value="AAO63354.1"/>
    <property type="molecule type" value="mRNA"/>
</dbReference>
<dbReference type="RefSeq" id="NP_173195.2">
    <property type="nucleotide sequence ID" value="NM_101614.4"/>
</dbReference>
<dbReference type="SMR" id="F4I7L1"/>
<dbReference type="BioGRID" id="23566">
    <property type="interactions" value="6"/>
</dbReference>
<dbReference type="FunCoup" id="F4I7L1">
    <property type="interactions" value="14"/>
</dbReference>
<dbReference type="STRING" id="3702.F4I7L1"/>
<dbReference type="PaxDb" id="3702-AT1G17520.1"/>
<dbReference type="PeptideAtlas" id="F4I7L1"/>
<dbReference type="ProteomicsDB" id="228337"/>
<dbReference type="GeneID" id="838326"/>
<dbReference type="KEGG" id="ath:AT1G17520"/>
<dbReference type="Araport" id="AT1G17520"/>
<dbReference type="TAIR" id="AT1G17520"/>
<dbReference type="eggNOG" id="ENOG502QTN3">
    <property type="taxonomic scope" value="Eukaryota"/>
</dbReference>
<dbReference type="HOGENOM" id="CLU_047477_1_0_1"/>
<dbReference type="InParanoid" id="F4I7L1"/>
<dbReference type="OrthoDB" id="608866at2759"/>
<dbReference type="PhylomeDB" id="F4I7L1"/>
<dbReference type="PRO" id="PR:F4I7L1"/>
<dbReference type="Proteomes" id="UP000006548">
    <property type="component" value="Chromosome 1"/>
</dbReference>
<dbReference type="ExpressionAtlas" id="F4I7L1">
    <property type="expression patterns" value="baseline and differential"/>
</dbReference>
<dbReference type="GO" id="GO:0000786">
    <property type="term" value="C:nucleosome"/>
    <property type="evidence" value="ECO:0007669"/>
    <property type="project" value="InterPro"/>
</dbReference>
<dbReference type="GO" id="GO:0005634">
    <property type="term" value="C:nucleus"/>
    <property type="evidence" value="ECO:0007669"/>
    <property type="project" value="UniProtKB-SubCell"/>
</dbReference>
<dbReference type="GO" id="GO:0003700">
    <property type="term" value="F:DNA-binding transcription factor activity"/>
    <property type="evidence" value="ECO:0000250"/>
    <property type="project" value="TAIR"/>
</dbReference>
<dbReference type="GO" id="GO:0003691">
    <property type="term" value="F:double-stranded telomeric DNA binding"/>
    <property type="evidence" value="ECO:0007669"/>
    <property type="project" value="InterPro"/>
</dbReference>
<dbReference type="GO" id="GO:0000976">
    <property type="term" value="F:transcription cis-regulatory region binding"/>
    <property type="evidence" value="ECO:0000353"/>
    <property type="project" value="TAIR"/>
</dbReference>
<dbReference type="GO" id="GO:0006334">
    <property type="term" value="P:nucleosome assembly"/>
    <property type="evidence" value="ECO:0007669"/>
    <property type="project" value="InterPro"/>
</dbReference>
<dbReference type="CDD" id="cd11660">
    <property type="entry name" value="SANT_TRF"/>
    <property type="match status" value="1"/>
</dbReference>
<dbReference type="FunFam" id="1.10.10.10:FF:000498">
    <property type="entry name" value="Telomere repeat-binding factor 1"/>
    <property type="match status" value="1"/>
</dbReference>
<dbReference type="FunFam" id="1.10.10.60:FF:000168">
    <property type="entry name" value="Telomere repeat-binding factor 1"/>
    <property type="match status" value="1"/>
</dbReference>
<dbReference type="FunFam" id="1.10.246.220:FF:000002">
    <property type="entry name" value="Telomere repeat-binding factor 1"/>
    <property type="match status" value="1"/>
</dbReference>
<dbReference type="Gene3D" id="1.10.246.220">
    <property type="match status" value="1"/>
</dbReference>
<dbReference type="Gene3D" id="1.10.10.10">
    <property type="entry name" value="Winged helix-like DNA-binding domain superfamily/Winged helix DNA-binding domain"/>
    <property type="match status" value="1"/>
</dbReference>
<dbReference type="InterPro" id="IPR005818">
    <property type="entry name" value="Histone_H1/H5_H15"/>
</dbReference>
<dbReference type="InterPro" id="IPR009057">
    <property type="entry name" value="Homeodomain-like_sf"/>
</dbReference>
<dbReference type="InterPro" id="IPR017930">
    <property type="entry name" value="Myb_dom"/>
</dbReference>
<dbReference type="InterPro" id="IPR001005">
    <property type="entry name" value="SANT/Myb"/>
</dbReference>
<dbReference type="InterPro" id="IPR044597">
    <property type="entry name" value="SMH1-6"/>
</dbReference>
<dbReference type="InterPro" id="IPR036388">
    <property type="entry name" value="WH-like_DNA-bd_sf"/>
</dbReference>
<dbReference type="PANTHER" id="PTHR46267">
    <property type="entry name" value="SINGLE MYB HISTONE 4"/>
    <property type="match status" value="1"/>
</dbReference>
<dbReference type="PANTHER" id="PTHR46267:SF3">
    <property type="entry name" value="TELOMERE REPEAT-BINDING FACTOR 4-RELATED"/>
    <property type="match status" value="1"/>
</dbReference>
<dbReference type="Pfam" id="PF00538">
    <property type="entry name" value="Linker_histone"/>
    <property type="match status" value="1"/>
</dbReference>
<dbReference type="Pfam" id="PF00249">
    <property type="entry name" value="Myb_DNA-binding"/>
    <property type="match status" value="1"/>
</dbReference>
<dbReference type="SMART" id="SM00526">
    <property type="entry name" value="H15"/>
    <property type="match status" value="1"/>
</dbReference>
<dbReference type="SMART" id="SM00717">
    <property type="entry name" value="SANT"/>
    <property type="match status" value="1"/>
</dbReference>
<dbReference type="SUPFAM" id="SSF46689">
    <property type="entry name" value="Homeodomain-like"/>
    <property type="match status" value="1"/>
</dbReference>
<dbReference type="PROSITE" id="PS51504">
    <property type="entry name" value="H15"/>
    <property type="match status" value="1"/>
</dbReference>
<dbReference type="PROSITE" id="PS51294">
    <property type="entry name" value="HTH_MYB"/>
    <property type="match status" value="1"/>
</dbReference>
<comment type="function">
    <text evidence="1">Binds preferentially double-stranded telomeric repeats.</text>
</comment>
<comment type="subcellular location">
    <subcellularLocation>
        <location evidence="3 4">Nucleus</location>
    </subcellularLocation>
    <subcellularLocation>
        <location evidence="4">Chromosome</location>
    </subcellularLocation>
</comment>
<comment type="domain">
    <text evidence="1">HTH myb-type domain confers double-stranded telomeric DNA-binding while the H15 domain is involved in non-specific DNA-protein interaction and multimerization.</text>
</comment>
<comment type="similarity">
    <text evidence="4">Belongs to the histone H1/H5 family. SMH subfamily.</text>
</comment>
<comment type="sequence caution" evidence="6">
    <conflict type="erroneous gene model prediction">
        <sequence resource="EMBL-CDS" id="AAF79481"/>
    </conflict>
</comment>
<feature type="chain" id="PRO_0000417013" description="Telomere repeat-binding factor 4">
    <location>
        <begin position="1"/>
        <end position="296"/>
    </location>
</feature>
<feature type="domain" description="HTH myb-type" evidence="3">
    <location>
        <begin position="1"/>
        <end position="62"/>
    </location>
</feature>
<feature type="domain" description="H15" evidence="4">
    <location>
        <begin position="126"/>
        <end position="200"/>
    </location>
</feature>
<feature type="DNA-binding region" description="H-T-H motif" evidence="3">
    <location>
        <begin position="28"/>
        <end position="58"/>
    </location>
</feature>
<feature type="region of interest" description="Disordered" evidence="5">
    <location>
        <begin position="197"/>
        <end position="232"/>
    </location>
</feature>
<feature type="coiled-coil region" evidence="2">
    <location>
        <begin position="245"/>
        <end position="282"/>
    </location>
</feature>
<feature type="compositionally biased region" description="Polar residues" evidence="5">
    <location>
        <begin position="219"/>
        <end position="232"/>
    </location>
</feature>
<feature type="sequence conflict" description="In Ref. 2; AAF79481 and 3; AEE29601." evidence="6" ref="2 3">
    <original>A</original>
    <variation>V</variation>
    <location>
        <position position="122"/>
    </location>
</feature>
<organism>
    <name type="scientific">Arabidopsis thaliana</name>
    <name type="common">Mouse-ear cress</name>
    <dbReference type="NCBI Taxonomy" id="3702"/>
    <lineage>
        <taxon>Eukaryota</taxon>
        <taxon>Viridiplantae</taxon>
        <taxon>Streptophyta</taxon>
        <taxon>Embryophyta</taxon>
        <taxon>Tracheophyta</taxon>
        <taxon>Spermatophyta</taxon>
        <taxon>Magnoliopsida</taxon>
        <taxon>eudicotyledons</taxon>
        <taxon>Gunneridae</taxon>
        <taxon>Pentapetalae</taxon>
        <taxon>rosids</taxon>
        <taxon>malvids</taxon>
        <taxon>Brassicales</taxon>
        <taxon>Brassicaceae</taxon>
        <taxon>Camelineae</taxon>
        <taxon>Arabidopsis</taxon>
    </lineage>
</organism>
<gene>
    <name type="ordered locus">At1g17520</name>
    <name type="ORF">F1L3.23</name>
</gene>
<proteinExistence type="evidence at transcript level"/>
<keyword id="KW-0158">Chromosome</keyword>
<keyword id="KW-0175">Coiled coil</keyword>
<keyword id="KW-0238">DNA-binding</keyword>
<keyword id="KW-0539">Nucleus</keyword>
<keyword id="KW-1185">Reference proteome</keyword>
<keyword id="KW-0804">Transcription</keyword>
<keyword id="KW-0805">Transcription regulation</keyword>
<evidence type="ECO:0000250" key="1"/>
<evidence type="ECO:0000255" key="2"/>
<evidence type="ECO:0000255" key="3">
    <source>
        <dbReference type="PROSITE-ProRule" id="PRU00625"/>
    </source>
</evidence>
<evidence type="ECO:0000255" key="4">
    <source>
        <dbReference type="PROSITE-ProRule" id="PRU00837"/>
    </source>
</evidence>
<evidence type="ECO:0000256" key="5">
    <source>
        <dbReference type="SAM" id="MobiDB-lite"/>
    </source>
</evidence>
<evidence type="ECO:0000305" key="6"/>
<sequence length="296" mass="32756">MGNQKLKWTAEEEEALLAGVRKHGPGKWKNILRDPELAEQLSSRSNIDLKDKWRNLSVAPGIQGSKDKIRTPKIKAAAFHLAAAAAAAIVTPTHSGHSSPVATLPRSGSSDLSIDDSFNIVADPKNAPRYDGMIFEALSNLTDANGSDVSAIFNFIEQRQEVPPNFRRMLSSRLRRLAAQGKLEKVSHLKSTQNFYKMNDNSLVQRTPHVARPKESNTKSRQQTNSQGPSISQQIVEASITAAYKLVEVENKLDVSKGAAEEIERLMKLAEEADEMLVIAREMHEECSQGKIMYLN</sequence>
<reference key="1">
    <citation type="submission" date="2004-01" db="EMBL/GenBank/DDBJ databases">
        <title>The MYB transcription factor family in Arabidopsis: a genome-wide cloning and expression pattern analysis.</title>
        <authorList>
            <person name="Qu L.-J."/>
            <person name="Gu H."/>
        </authorList>
    </citation>
    <scope>NUCLEOTIDE SEQUENCE [MRNA]</scope>
</reference>
<reference key="2">
    <citation type="journal article" date="2000" name="Nature">
        <title>Sequence and analysis of chromosome 1 of the plant Arabidopsis thaliana.</title>
        <authorList>
            <person name="Theologis A."/>
            <person name="Ecker J.R."/>
            <person name="Palm C.J."/>
            <person name="Federspiel N.A."/>
            <person name="Kaul S."/>
            <person name="White O."/>
            <person name="Alonso J."/>
            <person name="Altafi H."/>
            <person name="Araujo R."/>
            <person name="Bowman C.L."/>
            <person name="Brooks S.Y."/>
            <person name="Buehler E."/>
            <person name="Chan A."/>
            <person name="Chao Q."/>
            <person name="Chen H."/>
            <person name="Cheuk R.F."/>
            <person name="Chin C.W."/>
            <person name="Chung M.K."/>
            <person name="Conn L."/>
            <person name="Conway A.B."/>
            <person name="Conway A.R."/>
            <person name="Creasy T.H."/>
            <person name="Dewar K."/>
            <person name="Dunn P."/>
            <person name="Etgu P."/>
            <person name="Feldblyum T.V."/>
            <person name="Feng J.-D."/>
            <person name="Fong B."/>
            <person name="Fujii C.Y."/>
            <person name="Gill J.E."/>
            <person name="Goldsmith A.D."/>
            <person name="Haas B."/>
            <person name="Hansen N.F."/>
            <person name="Hughes B."/>
            <person name="Huizar L."/>
            <person name="Hunter J.L."/>
            <person name="Jenkins J."/>
            <person name="Johnson-Hopson C."/>
            <person name="Khan S."/>
            <person name="Khaykin E."/>
            <person name="Kim C.J."/>
            <person name="Koo H.L."/>
            <person name="Kremenetskaia I."/>
            <person name="Kurtz D.B."/>
            <person name="Kwan A."/>
            <person name="Lam B."/>
            <person name="Langin-Hooper S."/>
            <person name="Lee A."/>
            <person name="Lee J.M."/>
            <person name="Lenz C.A."/>
            <person name="Li J.H."/>
            <person name="Li Y.-P."/>
            <person name="Lin X."/>
            <person name="Liu S.X."/>
            <person name="Liu Z.A."/>
            <person name="Luros J.S."/>
            <person name="Maiti R."/>
            <person name="Marziali A."/>
            <person name="Militscher J."/>
            <person name="Miranda M."/>
            <person name="Nguyen M."/>
            <person name="Nierman W.C."/>
            <person name="Osborne B.I."/>
            <person name="Pai G."/>
            <person name="Peterson J."/>
            <person name="Pham P.K."/>
            <person name="Rizzo M."/>
            <person name="Rooney T."/>
            <person name="Rowley D."/>
            <person name="Sakano H."/>
            <person name="Salzberg S.L."/>
            <person name="Schwartz J.R."/>
            <person name="Shinn P."/>
            <person name="Southwick A.M."/>
            <person name="Sun H."/>
            <person name="Tallon L.J."/>
            <person name="Tambunga G."/>
            <person name="Toriumi M.J."/>
            <person name="Town C.D."/>
            <person name="Utterback T."/>
            <person name="Van Aken S."/>
            <person name="Vaysberg M."/>
            <person name="Vysotskaia V.S."/>
            <person name="Walker M."/>
            <person name="Wu D."/>
            <person name="Yu G."/>
            <person name="Fraser C.M."/>
            <person name="Venter J.C."/>
            <person name="Davis R.W."/>
        </authorList>
    </citation>
    <scope>NUCLEOTIDE SEQUENCE [LARGE SCALE GENOMIC DNA]</scope>
    <source>
        <strain>cv. Columbia</strain>
    </source>
</reference>
<reference key="3">
    <citation type="journal article" date="2017" name="Plant J.">
        <title>Araport11: a complete reannotation of the Arabidopsis thaliana reference genome.</title>
        <authorList>
            <person name="Cheng C.Y."/>
            <person name="Krishnakumar V."/>
            <person name="Chan A.P."/>
            <person name="Thibaud-Nissen F."/>
            <person name="Schobel S."/>
            <person name="Town C.D."/>
        </authorList>
    </citation>
    <scope>GENOME REANNOTATION</scope>
    <scope>SEQUENCE REVISION</scope>
    <source>
        <strain>cv. Columbia</strain>
    </source>
</reference>
<reference key="4">
    <citation type="journal article" date="2002" name="Science">
        <title>Functional annotation of a full-length Arabidopsis cDNA collection.</title>
        <authorList>
            <person name="Seki M."/>
            <person name="Narusaka M."/>
            <person name="Kamiya A."/>
            <person name="Ishida J."/>
            <person name="Satou M."/>
            <person name="Sakurai T."/>
            <person name="Nakajima M."/>
            <person name="Enju A."/>
            <person name="Akiyama K."/>
            <person name="Oono Y."/>
            <person name="Muramatsu M."/>
            <person name="Hayashizaki Y."/>
            <person name="Kawai J."/>
            <person name="Carninci P."/>
            <person name="Itoh M."/>
            <person name="Ishii Y."/>
            <person name="Arakawa T."/>
            <person name="Shibata K."/>
            <person name="Shinagawa A."/>
            <person name="Shinozaki K."/>
        </authorList>
    </citation>
    <scope>NUCLEOTIDE SEQUENCE [LARGE SCALE MRNA]</scope>
    <source>
        <strain>cv. Columbia</strain>
    </source>
</reference>
<reference key="5">
    <citation type="journal article" date="2003" name="Science">
        <title>Empirical analysis of transcriptional activity in the Arabidopsis genome.</title>
        <authorList>
            <person name="Yamada K."/>
            <person name="Lim J."/>
            <person name="Dale J.M."/>
            <person name="Chen H."/>
            <person name="Shinn P."/>
            <person name="Palm C.J."/>
            <person name="Southwick A.M."/>
            <person name="Wu H.C."/>
            <person name="Kim C.J."/>
            <person name="Nguyen M."/>
            <person name="Pham P.K."/>
            <person name="Cheuk R.F."/>
            <person name="Karlin-Newmann G."/>
            <person name="Liu S.X."/>
            <person name="Lam B."/>
            <person name="Sakano H."/>
            <person name="Wu T."/>
            <person name="Yu G."/>
            <person name="Miranda M."/>
            <person name="Quach H.L."/>
            <person name="Tripp M."/>
            <person name="Chang C.H."/>
            <person name="Lee J.M."/>
            <person name="Toriumi M.J."/>
            <person name="Chan M.M."/>
            <person name="Tang C.C."/>
            <person name="Onodera C.S."/>
            <person name="Deng J.M."/>
            <person name="Akiyama K."/>
            <person name="Ansari Y."/>
            <person name="Arakawa T."/>
            <person name="Banh J."/>
            <person name="Banno F."/>
            <person name="Bowser L."/>
            <person name="Brooks S.Y."/>
            <person name="Carninci P."/>
            <person name="Chao Q."/>
            <person name="Choy N."/>
            <person name="Enju A."/>
            <person name="Goldsmith A.D."/>
            <person name="Gurjal M."/>
            <person name="Hansen N.F."/>
            <person name="Hayashizaki Y."/>
            <person name="Johnson-Hopson C."/>
            <person name="Hsuan V.W."/>
            <person name="Iida K."/>
            <person name="Karnes M."/>
            <person name="Khan S."/>
            <person name="Koesema E."/>
            <person name="Ishida J."/>
            <person name="Jiang P.X."/>
            <person name="Jones T."/>
            <person name="Kawai J."/>
            <person name="Kamiya A."/>
            <person name="Meyers C."/>
            <person name="Nakajima M."/>
            <person name="Narusaka M."/>
            <person name="Seki M."/>
            <person name="Sakurai T."/>
            <person name="Satou M."/>
            <person name="Tamse R."/>
            <person name="Vaysberg M."/>
            <person name="Wallender E.K."/>
            <person name="Wong C."/>
            <person name="Yamamura Y."/>
            <person name="Yuan S."/>
            <person name="Shinozaki K."/>
            <person name="Davis R.W."/>
            <person name="Theologis A."/>
            <person name="Ecker J.R."/>
        </authorList>
    </citation>
    <scope>NUCLEOTIDE SEQUENCE [LARGE SCALE MRNA]</scope>
    <source>
        <strain>cv. Columbia</strain>
    </source>
</reference>
<reference key="6">
    <citation type="journal article" date="2003" name="Plant Physiol.">
        <title>The maize Single myb histone 1 gene, Smh1, belongs to a novel gene family and encodes a protein that binds telomere DNA repeats in vitro.</title>
        <authorList>
            <person name="Marian C.O."/>
            <person name="Bordoli S.J."/>
            <person name="Goltz M."/>
            <person name="Santarella R.A."/>
            <person name="Jackson L.P."/>
            <person name="Danilevskaya O."/>
            <person name="Beckstette M."/>
            <person name="Meeley R."/>
            <person name="Bass H.W."/>
        </authorList>
    </citation>
    <scope>GENE FAMILY</scope>
</reference>
<reference key="7">
    <citation type="journal article" date="2006" name="Plant Mol. Biol.">
        <title>The MYB transcription factor superfamily of Arabidopsis: expression analysis and phylogenetic comparison with the rice MYB family.</title>
        <authorList>
            <person name="Chen Y."/>
            <person name="Yang X."/>
            <person name="He K."/>
            <person name="Liu M."/>
            <person name="Li J."/>
            <person name="Gao Z."/>
            <person name="Lin Z."/>
            <person name="Zhang Y."/>
            <person name="Wang X."/>
            <person name="Qiu X."/>
            <person name="Shen Y."/>
            <person name="Zhang L."/>
            <person name="Deng X."/>
            <person name="Luo J."/>
            <person name="Deng X.-W."/>
            <person name="Chen Z."/>
            <person name="Gu H."/>
            <person name="Qu L.-J."/>
        </authorList>
    </citation>
    <scope>GENE FAMILY</scope>
</reference>
<accession>F4I7L1</accession>
<accession>Q8GWZ5</accession>
<accession>Q9LNQ2</accession>
<protein>
    <recommendedName>
        <fullName>Telomere repeat-binding factor 4</fullName>
    </recommendedName>
    <alternativeName>
        <fullName>MYB transcription factor</fullName>
    </alternativeName>
</protein>
<name>TRB4_ARATH</name>